<organism>
    <name type="scientific">Halalkalibacterium halodurans (strain ATCC BAA-125 / DSM 18197 / FERM 7344 / JCM 9153 / C-125)</name>
    <name type="common">Bacillus halodurans</name>
    <dbReference type="NCBI Taxonomy" id="272558"/>
    <lineage>
        <taxon>Bacteria</taxon>
        <taxon>Bacillati</taxon>
        <taxon>Bacillota</taxon>
        <taxon>Bacilli</taxon>
        <taxon>Bacillales</taxon>
        <taxon>Bacillaceae</taxon>
        <taxon>Halalkalibacterium (ex Joshi et al. 2022)</taxon>
    </lineage>
</organism>
<reference key="1">
    <citation type="journal article" date="2000" name="Nucleic Acids Res.">
        <title>Complete genome sequence of the alkaliphilic bacterium Bacillus halodurans and genomic sequence comparison with Bacillus subtilis.</title>
        <authorList>
            <person name="Takami H."/>
            <person name="Nakasone K."/>
            <person name="Takaki Y."/>
            <person name="Maeno G."/>
            <person name="Sasaki R."/>
            <person name="Masui N."/>
            <person name="Fuji F."/>
            <person name="Hirama C."/>
            <person name="Nakamura Y."/>
            <person name="Ogasawara N."/>
            <person name="Kuhara S."/>
            <person name="Horikoshi K."/>
        </authorList>
    </citation>
    <scope>NUCLEOTIDE SEQUENCE [LARGE SCALE GENOMIC DNA]</scope>
    <source>
        <strain>ATCC BAA-125 / DSM 18197 / FERM 7344 / JCM 9153 / C-125</strain>
    </source>
</reference>
<comment type="function">
    <text evidence="1">Catalyzes the formation of sulfite from adenosine 5'-phosphosulfate (APS) using thioredoxin as an electron donor.</text>
</comment>
<comment type="catalytic activity">
    <reaction evidence="1">
        <text>[thioredoxin]-disulfide + sulfite + AMP + 2 H(+) = adenosine 5'-phosphosulfate + [thioredoxin]-dithiol</text>
        <dbReference type="Rhea" id="RHEA:21976"/>
        <dbReference type="Rhea" id="RHEA-COMP:10698"/>
        <dbReference type="Rhea" id="RHEA-COMP:10700"/>
        <dbReference type="ChEBI" id="CHEBI:15378"/>
        <dbReference type="ChEBI" id="CHEBI:17359"/>
        <dbReference type="ChEBI" id="CHEBI:29950"/>
        <dbReference type="ChEBI" id="CHEBI:50058"/>
        <dbReference type="ChEBI" id="CHEBI:58243"/>
        <dbReference type="ChEBI" id="CHEBI:456215"/>
        <dbReference type="EC" id="1.8.4.10"/>
    </reaction>
</comment>
<comment type="cofactor">
    <cofactor evidence="1">
        <name>[4Fe-4S] cluster</name>
        <dbReference type="ChEBI" id="CHEBI:49883"/>
    </cofactor>
    <text evidence="1">Binds 1 [4Fe-4S] cluster per subunit.</text>
</comment>
<comment type="pathway">
    <text evidence="1">Sulfur metabolism; hydrogen sulfide biosynthesis; sulfite from sulfate.</text>
</comment>
<comment type="subcellular location">
    <subcellularLocation>
        <location evidence="1">Cytoplasm</location>
    </subcellularLocation>
</comment>
<comment type="similarity">
    <text evidence="1">Belongs to the PAPS reductase family. CysH subfamily.</text>
</comment>
<sequence>MDQSIQVNINEVNQALERKDSLDVIKWAYKTYGDKLVYACSMGAEGMVLIDLISKVRPDAPVIFLDTDFHFSETYELIERVKERYPKLQLKLVKPELTPEEQAETYGDRLWERQPDLCCKLRKLVPLEKELAQYDAWMSGLRRDQSPTRTNTQFVNEDRRFGSTKICPLIHWTSEEIWMYIELHQLPYNDLHDKQYPSIGCEYCTRPVKEGEDERAGRWSNTSKTECGLHQ</sequence>
<keyword id="KW-0963">Cytoplasm</keyword>
<keyword id="KW-0408">Iron</keyword>
<keyword id="KW-0411">Iron-sulfur</keyword>
<keyword id="KW-0479">Metal-binding</keyword>
<keyword id="KW-0560">Oxidoreductase</keyword>
<keyword id="KW-1185">Reference proteome</keyword>
<dbReference type="EC" id="1.8.4.10" evidence="1"/>
<dbReference type="EMBL" id="BA000004">
    <property type="protein sequence ID" value="BAB05205.1"/>
    <property type="molecule type" value="Genomic_DNA"/>
</dbReference>
<dbReference type="PIR" id="F83835">
    <property type="entry name" value="F83835"/>
</dbReference>
<dbReference type="SMR" id="Q9KCT3"/>
<dbReference type="STRING" id="272558.gene:10727384"/>
<dbReference type="KEGG" id="bha:BH1486"/>
<dbReference type="eggNOG" id="COG0175">
    <property type="taxonomic scope" value="Bacteria"/>
</dbReference>
<dbReference type="HOGENOM" id="CLU_044089_2_1_9"/>
<dbReference type="Proteomes" id="UP000001258">
    <property type="component" value="Chromosome"/>
</dbReference>
<dbReference type="GO" id="GO:0005737">
    <property type="term" value="C:cytoplasm"/>
    <property type="evidence" value="ECO:0007669"/>
    <property type="project" value="UniProtKB-SubCell"/>
</dbReference>
<dbReference type="GO" id="GO:0051539">
    <property type="term" value="F:4 iron, 4 sulfur cluster binding"/>
    <property type="evidence" value="ECO:0007669"/>
    <property type="project" value="UniProtKB-UniRule"/>
</dbReference>
<dbReference type="GO" id="GO:0043866">
    <property type="term" value="F:adenylyl-sulfate reductase (thioredoxin) activity"/>
    <property type="evidence" value="ECO:0007669"/>
    <property type="project" value="UniProtKB-EC"/>
</dbReference>
<dbReference type="GO" id="GO:0046872">
    <property type="term" value="F:metal ion binding"/>
    <property type="evidence" value="ECO:0007669"/>
    <property type="project" value="UniProtKB-KW"/>
</dbReference>
<dbReference type="GO" id="GO:0004604">
    <property type="term" value="F:phosphoadenylyl-sulfate reductase (thioredoxin) activity"/>
    <property type="evidence" value="ECO:0007669"/>
    <property type="project" value="UniProtKB-UniRule"/>
</dbReference>
<dbReference type="GO" id="GO:0019344">
    <property type="term" value="P:cysteine biosynthetic process"/>
    <property type="evidence" value="ECO:0007669"/>
    <property type="project" value="InterPro"/>
</dbReference>
<dbReference type="GO" id="GO:0070814">
    <property type="term" value="P:hydrogen sulfide biosynthetic process"/>
    <property type="evidence" value="ECO:0007669"/>
    <property type="project" value="UniProtKB-UniRule"/>
</dbReference>
<dbReference type="GO" id="GO:0019379">
    <property type="term" value="P:sulfate assimilation, phosphoadenylyl sulfate reduction by phosphoadenylyl-sulfate reductase (thioredoxin)"/>
    <property type="evidence" value="ECO:0007669"/>
    <property type="project" value="UniProtKB-UniRule"/>
</dbReference>
<dbReference type="CDD" id="cd23945">
    <property type="entry name" value="PAPS_reductase"/>
    <property type="match status" value="1"/>
</dbReference>
<dbReference type="FunFam" id="3.40.50.620:FF:000095">
    <property type="entry name" value="Phosphoadenosine phosphosulfate reductase"/>
    <property type="match status" value="1"/>
</dbReference>
<dbReference type="Gene3D" id="3.40.50.620">
    <property type="entry name" value="HUPs"/>
    <property type="match status" value="1"/>
</dbReference>
<dbReference type="HAMAP" id="MF_00063">
    <property type="entry name" value="CysH"/>
    <property type="match status" value="1"/>
</dbReference>
<dbReference type="InterPro" id="IPR011798">
    <property type="entry name" value="APS_reductase"/>
</dbReference>
<dbReference type="InterPro" id="IPR004511">
    <property type="entry name" value="PAPS/APS_Rdtase"/>
</dbReference>
<dbReference type="InterPro" id="IPR002500">
    <property type="entry name" value="PAPS_reduct_dom"/>
</dbReference>
<dbReference type="InterPro" id="IPR014729">
    <property type="entry name" value="Rossmann-like_a/b/a_fold"/>
</dbReference>
<dbReference type="NCBIfam" id="TIGR02055">
    <property type="entry name" value="APS_reductase"/>
    <property type="match status" value="1"/>
</dbReference>
<dbReference type="NCBIfam" id="TIGR00434">
    <property type="entry name" value="cysH"/>
    <property type="match status" value="1"/>
</dbReference>
<dbReference type="NCBIfam" id="NF002537">
    <property type="entry name" value="PRK02090.1"/>
    <property type="match status" value="1"/>
</dbReference>
<dbReference type="PANTHER" id="PTHR46509">
    <property type="entry name" value="PHOSPHOADENOSINE PHOSPHOSULFATE REDUCTASE"/>
    <property type="match status" value="1"/>
</dbReference>
<dbReference type="PANTHER" id="PTHR46509:SF1">
    <property type="entry name" value="PHOSPHOADENOSINE PHOSPHOSULFATE REDUCTASE"/>
    <property type="match status" value="1"/>
</dbReference>
<dbReference type="Pfam" id="PF01507">
    <property type="entry name" value="PAPS_reduct"/>
    <property type="match status" value="1"/>
</dbReference>
<dbReference type="PIRSF" id="PIRSF000857">
    <property type="entry name" value="PAPS_reductase"/>
    <property type="match status" value="1"/>
</dbReference>
<dbReference type="SUPFAM" id="SSF52402">
    <property type="entry name" value="Adenine nucleotide alpha hydrolases-like"/>
    <property type="match status" value="1"/>
</dbReference>
<evidence type="ECO:0000255" key="1">
    <source>
        <dbReference type="HAMAP-Rule" id="MF_00063"/>
    </source>
</evidence>
<feature type="chain" id="PRO_0000100625" description="Adenosine 5'-phosphosulfate reductase">
    <location>
        <begin position="1"/>
        <end position="231"/>
    </location>
</feature>
<feature type="active site" description="Nucleophile; cysteine thiosulfonate intermediate" evidence="1">
    <location>
        <position position="227"/>
    </location>
</feature>
<feature type="binding site" evidence="1">
    <location>
        <position position="118"/>
    </location>
    <ligand>
        <name>[4Fe-4S] cluster</name>
        <dbReference type="ChEBI" id="CHEBI:49883"/>
    </ligand>
</feature>
<feature type="binding site" evidence="1">
    <location>
        <position position="119"/>
    </location>
    <ligand>
        <name>[4Fe-4S] cluster</name>
        <dbReference type="ChEBI" id="CHEBI:49883"/>
    </ligand>
</feature>
<feature type="binding site" evidence="1">
    <location>
        <position position="201"/>
    </location>
    <ligand>
        <name>[4Fe-4S] cluster</name>
        <dbReference type="ChEBI" id="CHEBI:49883"/>
    </ligand>
</feature>
<feature type="binding site" evidence="1">
    <location>
        <position position="204"/>
    </location>
    <ligand>
        <name>[4Fe-4S] cluster</name>
        <dbReference type="ChEBI" id="CHEBI:49883"/>
    </ligand>
</feature>
<accession>Q9KCT3</accession>
<protein>
    <recommendedName>
        <fullName evidence="1">Adenosine 5'-phosphosulfate reductase</fullName>
        <shortName evidence="1">APS reductase</shortName>
        <ecNumber evidence="1">1.8.4.10</ecNumber>
    </recommendedName>
    <alternativeName>
        <fullName evidence="1">5'-adenylylsulfate reductase</fullName>
    </alternativeName>
    <alternativeName>
        <fullName evidence="1">Thioredoxin-dependent 5'-adenylylsulfate reductase</fullName>
    </alternativeName>
</protein>
<proteinExistence type="inferred from homology"/>
<gene>
    <name evidence="1" type="primary">cysH</name>
    <name type="ordered locus">BH1486</name>
</gene>
<name>CYSH_HALH5</name>